<feature type="chain" id="PRO_1000145622" description="Agmatinase">
    <location>
        <begin position="1"/>
        <end position="306"/>
    </location>
</feature>
<feature type="binding site" evidence="1">
    <location>
        <position position="126"/>
    </location>
    <ligand>
        <name>Mn(2+)</name>
        <dbReference type="ChEBI" id="CHEBI:29035"/>
    </ligand>
</feature>
<feature type="binding site" evidence="1">
    <location>
        <position position="149"/>
    </location>
    <ligand>
        <name>Mn(2+)</name>
        <dbReference type="ChEBI" id="CHEBI:29035"/>
    </ligand>
</feature>
<feature type="binding site" evidence="1">
    <location>
        <position position="151"/>
    </location>
    <ligand>
        <name>Mn(2+)</name>
        <dbReference type="ChEBI" id="CHEBI:29035"/>
    </ligand>
</feature>
<feature type="binding site" evidence="1">
    <location>
        <position position="153"/>
    </location>
    <ligand>
        <name>Mn(2+)</name>
        <dbReference type="ChEBI" id="CHEBI:29035"/>
    </ligand>
</feature>
<feature type="binding site" evidence="1">
    <location>
        <position position="230"/>
    </location>
    <ligand>
        <name>Mn(2+)</name>
        <dbReference type="ChEBI" id="CHEBI:29035"/>
    </ligand>
</feature>
<feature type="binding site" evidence="1">
    <location>
        <position position="232"/>
    </location>
    <ligand>
        <name>Mn(2+)</name>
        <dbReference type="ChEBI" id="CHEBI:29035"/>
    </ligand>
</feature>
<dbReference type="EC" id="3.5.3.11" evidence="1"/>
<dbReference type="EMBL" id="AM933173">
    <property type="protein sequence ID" value="CAR38778.1"/>
    <property type="molecule type" value="Genomic_DNA"/>
</dbReference>
<dbReference type="RefSeq" id="WP_000105553.1">
    <property type="nucleotide sequence ID" value="NC_011274.1"/>
</dbReference>
<dbReference type="SMR" id="B5RE39"/>
<dbReference type="KEGG" id="seg:SG2973"/>
<dbReference type="HOGENOM" id="CLU_039478_0_0_6"/>
<dbReference type="UniPathway" id="UPA00534">
    <property type="reaction ID" value="UER00287"/>
</dbReference>
<dbReference type="Proteomes" id="UP000008321">
    <property type="component" value="Chromosome"/>
</dbReference>
<dbReference type="GO" id="GO:0008783">
    <property type="term" value="F:agmatinase activity"/>
    <property type="evidence" value="ECO:0007669"/>
    <property type="project" value="UniProtKB-UniRule"/>
</dbReference>
<dbReference type="GO" id="GO:0030145">
    <property type="term" value="F:manganese ion binding"/>
    <property type="evidence" value="ECO:0007669"/>
    <property type="project" value="InterPro"/>
</dbReference>
<dbReference type="GO" id="GO:0033389">
    <property type="term" value="P:putrescine biosynthetic process from arginine, via agmatine"/>
    <property type="evidence" value="ECO:0007669"/>
    <property type="project" value="TreeGrafter"/>
</dbReference>
<dbReference type="GO" id="GO:0008295">
    <property type="term" value="P:spermidine biosynthetic process"/>
    <property type="evidence" value="ECO:0007669"/>
    <property type="project" value="UniProtKB-UniRule"/>
</dbReference>
<dbReference type="CDD" id="cd11592">
    <property type="entry name" value="Agmatinase_PAH"/>
    <property type="match status" value="1"/>
</dbReference>
<dbReference type="FunFam" id="3.40.800.10:FF:000001">
    <property type="entry name" value="Agmatinase"/>
    <property type="match status" value="1"/>
</dbReference>
<dbReference type="Gene3D" id="3.40.800.10">
    <property type="entry name" value="Ureohydrolase domain"/>
    <property type="match status" value="1"/>
</dbReference>
<dbReference type="HAMAP" id="MF_01418">
    <property type="entry name" value="SpeB"/>
    <property type="match status" value="1"/>
</dbReference>
<dbReference type="InterPro" id="IPR023694">
    <property type="entry name" value="Agmatinase"/>
</dbReference>
<dbReference type="InterPro" id="IPR005925">
    <property type="entry name" value="Agmatinase-rel"/>
</dbReference>
<dbReference type="InterPro" id="IPR006035">
    <property type="entry name" value="Ureohydrolase"/>
</dbReference>
<dbReference type="InterPro" id="IPR023696">
    <property type="entry name" value="Ureohydrolase_dom_sf"/>
</dbReference>
<dbReference type="InterPro" id="IPR020855">
    <property type="entry name" value="Ureohydrolase_Mn_BS"/>
</dbReference>
<dbReference type="NCBIfam" id="TIGR01230">
    <property type="entry name" value="agmatinase"/>
    <property type="match status" value="1"/>
</dbReference>
<dbReference type="NCBIfam" id="NF002564">
    <property type="entry name" value="PRK02190.1"/>
    <property type="match status" value="1"/>
</dbReference>
<dbReference type="PANTHER" id="PTHR11358">
    <property type="entry name" value="ARGINASE/AGMATINASE"/>
    <property type="match status" value="1"/>
</dbReference>
<dbReference type="PANTHER" id="PTHR11358:SF26">
    <property type="entry name" value="GUANIDINO ACID HYDROLASE, MITOCHONDRIAL"/>
    <property type="match status" value="1"/>
</dbReference>
<dbReference type="Pfam" id="PF00491">
    <property type="entry name" value="Arginase"/>
    <property type="match status" value="1"/>
</dbReference>
<dbReference type="PIRSF" id="PIRSF036979">
    <property type="entry name" value="Arginase"/>
    <property type="match status" value="1"/>
</dbReference>
<dbReference type="SUPFAM" id="SSF52768">
    <property type="entry name" value="Arginase/deacetylase"/>
    <property type="match status" value="1"/>
</dbReference>
<dbReference type="PROSITE" id="PS01053">
    <property type="entry name" value="ARGINASE_1"/>
    <property type="match status" value="1"/>
</dbReference>
<dbReference type="PROSITE" id="PS51409">
    <property type="entry name" value="ARGINASE_2"/>
    <property type="match status" value="1"/>
</dbReference>
<keyword id="KW-0378">Hydrolase</keyword>
<keyword id="KW-0464">Manganese</keyword>
<keyword id="KW-0479">Metal-binding</keyword>
<keyword id="KW-0620">Polyamine biosynthesis</keyword>
<keyword id="KW-0661">Putrescine biosynthesis</keyword>
<keyword id="KW-0745">Spermidine biosynthesis</keyword>
<gene>
    <name evidence="1" type="primary">speB</name>
    <name type="ordered locus">SG2973</name>
</gene>
<comment type="function">
    <text evidence="1">Catalyzes the formation of putrescine from agmatine.</text>
</comment>
<comment type="catalytic activity">
    <reaction evidence="1">
        <text>agmatine + H2O = urea + putrescine</text>
        <dbReference type="Rhea" id="RHEA:13929"/>
        <dbReference type="ChEBI" id="CHEBI:15377"/>
        <dbReference type="ChEBI" id="CHEBI:16199"/>
        <dbReference type="ChEBI" id="CHEBI:58145"/>
        <dbReference type="ChEBI" id="CHEBI:326268"/>
        <dbReference type="EC" id="3.5.3.11"/>
    </reaction>
</comment>
<comment type="cofactor">
    <cofactor evidence="1">
        <name>Mn(2+)</name>
        <dbReference type="ChEBI" id="CHEBI:29035"/>
    </cofactor>
</comment>
<comment type="pathway">
    <text evidence="1">Amine and polyamine biosynthesis; putrescine biosynthesis via agmatine pathway; putrescine from agmatine: step 1/1.</text>
</comment>
<comment type="similarity">
    <text evidence="1">Belongs to the arginase family. Agmatinase subfamily.</text>
</comment>
<proteinExistence type="inferred from homology"/>
<reference key="1">
    <citation type="journal article" date="2008" name="Genome Res.">
        <title>Comparative genome analysis of Salmonella enteritidis PT4 and Salmonella gallinarum 287/91 provides insights into evolutionary and host adaptation pathways.</title>
        <authorList>
            <person name="Thomson N.R."/>
            <person name="Clayton D.J."/>
            <person name="Windhorst D."/>
            <person name="Vernikos G."/>
            <person name="Davidson S."/>
            <person name="Churcher C."/>
            <person name="Quail M.A."/>
            <person name="Stevens M."/>
            <person name="Jones M.A."/>
            <person name="Watson M."/>
            <person name="Barron A."/>
            <person name="Layton A."/>
            <person name="Pickard D."/>
            <person name="Kingsley R.A."/>
            <person name="Bignell A."/>
            <person name="Clark L."/>
            <person name="Harris B."/>
            <person name="Ormond D."/>
            <person name="Abdellah Z."/>
            <person name="Brooks K."/>
            <person name="Cherevach I."/>
            <person name="Chillingworth T."/>
            <person name="Woodward J."/>
            <person name="Norberczak H."/>
            <person name="Lord A."/>
            <person name="Arrowsmith C."/>
            <person name="Jagels K."/>
            <person name="Moule S."/>
            <person name="Mungall K."/>
            <person name="Saunders M."/>
            <person name="Whitehead S."/>
            <person name="Chabalgoity J.A."/>
            <person name="Maskell D."/>
            <person name="Humphreys T."/>
            <person name="Roberts M."/>
            <person name="Barrow P.A."/>
            <person name="Dougan G."/>
            <person name="Parkhill J."/>
        </authorList>
    </citation>
    <scope>NUCLEOTIDE SEQUENCE [LARGE SCALE GENOMIC DNA]</scope>
    <source>
        <strain>287/91 / NCTC 13346</strain>
    </source>
</reference>
<evidence type="ECO:0000255" key="1">
    <source>
        <dbReference type="HAMAP-Rule" id="MF_01418"/>
    </source>
</evidence>
<sequence>MSTLGHQYDNSLVSNAFGFLRLPMNFQPYDSDADWVITGVPFDMATSGRAGGRHGPAAIRQVSTNLAWEHHRFPWSFDMRERLNVVDCGDLVYAFGDAREMSEKLQAHAEKLLSAGKRMLSFGGDHFVTLPLLRAHAKHFGKMALVHFDAHTDTYANGCEFDHGTMFYTAPKEGLIDPHHSVQIGIRTEFDKDNGFTVLDACQVNDRGVDDILAQVKQIVGDMPVYLTFDIDCLDPAFAPGTGTPVIGGLTSDRAIKLVRGLKDLNIVGMDVVEVAPAYDQSEITALAAATLALEMLYIQAAKKGE</sequence>
<protein>
    <recommendedName>
        <fullName evidence="1">Agmatinase</fullName>
        <ecNumber evidence="1">3.5.3.11</ecNumber>
    </recommendedName>
    <alternativeName>
        <fullName evidence="1">Agmatine ureohydrolase</fullName>
        <shortName evidence="1">AUH</shortName>
    </alternativeName>
</protein>
<accession>B5RE39</accession>
<organism>
    <name type="scientific">Salmonella gallinarum (strain 287/91 / NCTC 13346)</name>
    <dbReference type="NCBI Taxonomy" id="550538"/>
    <lineage>
        <taxon>Bacteria</taxon>
        <taxon>Pseudomonadati</taxon>
        <taxon>Pseudomonadota</taxon>
        <taxon>Gammaproteobacteria</taxon>
        <taxon>Enterobacterales</taxon>
        <taxon>Enterobacteriaceae</taxon>
        <taxon>Salmonella</taxon>
    </lineage>
</organism>
<name>SPEB_SALG2</name>